<dbReference type="EMBL" id="AY318958">
    <property type="protein sequence ID" value="AAP85369.1"/>
    <property type="molecule type" value="mRNA"/>
</dbReference>
<dbReference type="EMBL" id="AY321317">
    <property type="protein sequence ID" value="AAP86249.1"/>
    <property type="molecule type" value="mRNA"/>
</dbReference>
<dbReference type="RefSeq" id="NP_062160.2">
    <property type="nucleotide sequence ID" value="NM_019287.2"/>
</dbReference>
<dbReference type="SMR" id="Q7TMA5"/>
<dbReference type="BioGRID" id="248449">
    <property type="interactions" value="1"/>
</dbReference>
<dbReference type="DIP" id="DIP-29910N"/>
<dbReference type="FunCoup" id="Q7TMA5">
    <property type="interactions" value="304"/>
</dbReference>
<dbReference type="IntAct" id="Q7TMA5">
    <property type="interactions" value="20"/>
</dbReference>
<dbReference type="STRING" id="10116.ENSRNOP00000039779"/>
<dbReference type="CarbonylDB" id="Q7TMA5"/>
<dbReference type="GlyCosmos" id="Q7TMA5">
    <property type="glycosylation" value="21 sites, No reported glycans"/>
</dbReference>
<dbReference type="GlyGen" id="Q7TMA5">
    <property type="glycosylation" value="22 sites"/>
</dbReference>
<dbReference type="iPTMnet" id="Q7TMA5"/>
<dbReference type="PhosphoSitePlus" id="Q7TMA5"/>
<dbReference type="jPOST" id="Q7TMA5"/>
<dbReference type="PaxDb" id="10116-ENSRNOP00000039779"/>
<dbReference type="GeneID" id="54225"/>
<dbReference type="KEGG" id="rno:54225"/>
<dbReference type="AGR" id="RGD:2129"/>
<dbReference type="CTD" id="338"/>
<dbReference type="RGD" id="2129">
    <property type="gene designation" value="Apob"/>
</dbReference>
<dbReference type="VEuPathDB" id="HostDB:ENSRNOG00000005542"/>
<dbReference type="eggNOG" id="KOG0654">
    <property type="taxonomic scope" value="Eukaryota"/>
</dbReference>
<dbReference type="eggNOG" id="KOG4338">
    <property type="taxonomic scope" value="Eukaryota"/>
</dbReference>
<dbReference type="InParanoid" id="Q7TMA5"/>
<dbReference type="OrthoDB" id="32231at9989"/>
<dbReference type="PhylomeDB" id="Q7TMA5"/>
<dbReference type="TreeFam" id="TF331316"/>
<dbReference type="Reactome" id="R-RNO-202733">
    <property type="pathway name" value="Cell surface interactions at the vascular wall"/>
</dbReference>
<dbReference type="Reactome" id="R-RNO-3000471">
    <property type="pathway name" value="Scavenging by Class B Receptors"/>
</dbReference>
<dbReference type="Reactome" id="R-RNO-3000480">
    <property type="pathway name" value="Scavenging by Class A Receptors"/>
</dbReference>
<dbReference type="Reactome" id="R-RNO-3000497">
    <property type="pathway name" value="Scavenging by Class H Receptors"/>
</dbReference>
<dbReference type="Reactome" id="R-RNO-381426">
    <property type="pathway name" value="Regulation of Insulin-like Growth Factor (IGF) transport and uptake by Insulin-like Growth Factor Binding Proteins (IGFBPs)"/>
</dbReference>
<dbReference type="Reactome" id="R-RNO-432142">
    <property type="pathway name" value="Platelet sensitization by LDL"/>
</dbReference>
<dbReference type="Reactome" id="R-RNO-5686938">
    <property type="pathway name" value="Regulation of TLR by endogenous ligand"/>
</dbReference>
<dbReference type="Reactome" id="R-RNO-8856825">
    <property type="pathway name" value="Cargo recognition for clathrin-mediated endocytosis"/>
</dbReference>
<dbReference type="Reactome" id="R-RNO-8856828">
    <property type="pathway name" value="Clathrin-mediated endocytosis"/>
</dbReference>
<dbReference type="Reactome" id="R-RNO-8866423">
    <property type="pathway name" value="VLDL assembly"/>
</dbReference>
<dbReference type="Reactome" id="R-RNO-8957275">
    <property type="pathway name" value="Post-translational protein phosphorylation"/>
</dbReference>
<dbReference type="Reactome" id="R-RNO-8963888">
    <property type="pathway name" value="Chylomicron assembly"/>
</dbReference>
<dbReference type="Reactome" id="R-RNO-8963901">
    <property type="pathway name" value="Chylomicron remodeling"/>
</dbReference>
<dbReference type="Reactome" id="R-RNO-8964026">
    <property type="pathway name" value="Chylomicron clearance"/>
</dbReference>
<dbReference type="Reactome" id="R-RNO-8964038">
    <property type="pathway name" value="LDL clearance"/>
</dbReference>
<dbReference type="Reactome" id="R-RNO-8964046">
    <property type="pathway name" value="VLDL clearance"/>
</dbReference>
<dbReference type="Reactome" id="R-RNO-9707616">
    <property type="pathway name" value="Heme signaling"/>
</dbReference>
<dbReference type="Reactome" id="R-RNO-975634">
    <property type="pathway name" value="Retinoid metabolism and transport"/>
</dbReference>
<dbReference type="PRO" id="PR:Q7TMA5"/>
<dbReference type="Proteomes" id="UP000002494">
    <property type="component" value="Chromosome 6"/>
</dbReference>
<dbReference type="Bgee" id="ENSRNOG00000005542">
    <property type="expression patterns" value="Expressed in liver and 12 other cell types or tissues"/>
</dbReference>
<dbReference type="ExpressionAtlas" id="Q7TMA5">
    <property type="expression patterns" value="baseline and differential"/>
</dbReference>
<dbReference type="GO" id="GO:0042627">
    <property type="term" value="C:chylomicron"/>
    <property type="evidence" value="ECO:0000266"/>
    <property type="project" value="RGD"/>
</dbReference>
<dbReference type="GO" id="GO:0005737">
    <property type="term" value="C:cytoplasm"/>
    <property type="evidence" value="ECO:0000250"/>
    <property type="project" value="UniProtKB"/>
</dbReference>
<dbReference type="GO" id="GO:0005783">
    <property type="term" value="C:endoplasmic reticulum"/>
    <property type="evidence" value="ECO:0000266"/>
    <property type="project" value="RGD"/>
</dbReference>
<dbReference type="GO" id="GO:0070971">
    <property type="term" value="C:endoplasmic reticulum exit site"/>
    <property type="evidence" value="ECO:0000266"/>
    <property type="project" value="RGD"/>
</dbReference>
<dbReference type="GO" id="GO:0005615">
    <property type="term" value="C:extracellular space"/>
    <property type="evidence" value="ECO:0000314"/>
    <property type="project" value="RGD"/>
</dbReference>
<dbReference type="GO" id="GO:0034364">
    <property type="term" value="C:high-density lipoprotein particle"/>
    <property type="evidence" value="ECO:0000314"/>
    <property type="project" value="RGD"/>
</dbReference>
<dbReference type="GO" id="GO:0034363">
    <property type="term" value="C:intermediate-density lipoprotein particle"/>
    <property type="evidence" value="ECO:0000266"/>
    <property type="project" value="RGD"/>
</dbReference>
<dbReference type="GO" id="GO:0005811">
    <property type="term" value="C:lipid droplet"/>
    <property type="evidence" value="ECO:0007669"/>
    <property type="project" value="UniProtKB-SubCell"/>
</dbReference>
<dbReference type="GO" id="GO:0034362">
    <property type="term" value="C:low-density lipoprotein particle"/>
    <property type="evidence" value="ECO:0000314"/>
    <property type="project" value="RGD"/>
</dbReference>
<dbReference type="GO" id="GO:0034359">
    <property type="term" value="C:mature chylomicron"/>
    <property type="evidence" value="ECO:0000266"/>
    <property type="project" value="RGD"/>
</dbReference>
<dbReference type="GO" id="GO:0043025">
    <property type="term" value="C:neuronal cell body"/>
    <property type="evidence" value="ECO:0000266"/>
    <property type="project" value="RGD"/>
</dbReference>
<dbReference type="GO" id="GO:0034361">
    <property type="term" value="C:very-low-density lipoprotein particle"/>
    <property type="evidence" value="ECO:0000314"/>
    <property type="project" value="RGD"/>
</dbReference>
<dbReference type="GO" id="GO:0031983">
    <property type="term" value="C:vesicle lumen"/>
    <property type="evidence" value="ECO:0000314"/>
    <property type="project" value="RGD"/>
</dbReference>
<dbReference type="GO" id="GO:0120020">
    <property type="term" value="F:cholesterol transfer activity"/>
    <property type="evidence" value="ECO:0000266"/>
    <property type="project" value="RGD"/>
</dbReference>
<dbReference type="GO" id="GO:0008201">
    <property type="term" value="F:heparin binding"/>
    <property type="evidence" value="ECO:0000266"/>
    <property type="project" value="RGD"/>
</dbReference>
<dbReference type="GO" id="GO:0035473">
    <property type="term" value="F:lipase binding"/>
    <property type="evidence" value="ECO:0000266"/>
    <property type="project" value="RGD"/>
</dbReference>
<dbReference type="GO" id="GO:0050750">
    <property type="term" value="F:low-density lipoprotein particle receptor binding"/>
    <property type="evidence" value="ECO:0000266"/>
    <property type="project" value="RGD"/>
</dbReference>
<dbReference type="GO" id="GO:0005543">
    <property type="term" value="F:phospholipid binding"/>
    <property type="evidence" value="ECO:0000266"/>
    <property type="project" value="RGD"/>
</dbReference>
<dbReference type="GO" id="GO:0048018">
    <property type="term" value="F:receptor ligand activity"/>
    <property type="evidence" value="ECO:0000266"/>
    <property type="project" value="RGD"/>
</dbReference>
<dbReference type="GO" id="GO:0048844">
    <property type="term" value="P:artery morphogenesis"/>
    <property type="evidence" value="ECO:0000266"/>
    <property type="project" value="RGD"/>
</dbReference>
<dbReference type="GO" id="GO:0071402">
    <property type="term" value="P:cellular response to lipoprotein particle stimulus"/>
    <property type="evidence" value="ECO:0000266"/>
    <property type="project" value="RGD"/>
</dbReference>
<dbReference type="GO" id="GO:0071379">
    <property type="term" value="P:cellular response to prostaglandin stimulus"/>
    <property type="evidence" value="ECO:0000270"/>
    <property type="project" value="RGD"/>
</dbReference>
<dbReference type="GO" id="GO:0071356">
    <property type="term" value="P:cellular response to tumor necrosis factor"/>
    <property type="evidence" value="ECO:0000270"/>
    <property type="project" value="RGD"/>
</dbReference>
<dbReference type="GO" id="GO:0033344">
    <property type="term" value="P:cholesterol efflux"/>
    <property type="evidence" value="ECO:0000266"/>
    <property type="project" value="RGD"/>
</dbReference>
<dbReference type="GO" id="GO:0042632">
    <property type="term" value="P:cholesterol homeostasis"/>
    <property type="evidence" value="ECO:0000266"/>
    <property type="project" value="RGD"/>
</dbReference>
<dbReference type="GO" id="GO:0008203">
    <property type="term" value="P:cholesterol metabolic process"/>
    <property type="evidence" value="ECO:0000266"/>
    <property type="project" value="RGD"/>
</dbReference>
<dbReference type="GO" id="GO:0030301">
    <property type="term" value="P:cholesterol transport"/>
    <property type="evidence" value="ECO:0000266"/>
    <property type="project" value="RGD"/>
</dbReference>
<dbReference type="GO" id="GO:0051649">
    <property type="term" value="P:establishment of localization in cell"/>
    <property type="evidence" value="ECO:0000266"/>
    <property type="project" value="RGD"/>
</dbReference>
<dbReference type="GO" id="GO:0009566">
    <property type="term" value="P:fertilization"/>
    <property type="evidence" value="ECO:0000266"/>
    <property type="project" value="RGD"/>
</dbReference>
<dbReference type="GO" id="GO:0030317">
    <property type="term" value="P:flagellated sperm motility"/>
    <property type="evidence" value="ECO:0000266"/>
    <property type="project" value="RGD"/>
</dbReference>
<dbReference type="GO" id="GO:0001701">
    <property type="term" value="P:in utero embryonic development"/>
    <property type="evidence" value="ECO:0000266"/>
    <property type="project" value="RGD"/>
</dbReference>
<dbReference type="GO" id="GO:0016042">
    <property type="term" value="P:lipid catabolic process"/>
    <property type="evidence" value="ECO:0000266"/>
    <property type="project" value="RGD"/>
</dbReference>
<dbReference type="GO" id="GO:0006629">
    <property type="term" value="P:lipid metabolic process"/>
    <property type="evidence" value="ECO:0000266"/>
    <property type="project" value="RGD"/>
</dbReference>
<dbReference type="GO" id="GO:0042158">
    <property type="term" value="P:lipoprotein biosynthetic process"/>
    <property type="evidence" value="ECO:0000266"/>
    <property type="project" value="RGD"/>
</dbReference>
<dbReference type="GO" id="GO:0042159">
    <property type="term" value="P:lipoprotein catabolic process"/>
    <property type="evidence" value="ECO:0000266"/>
    <property type="project" value="RGD"/>
</dbReference>
<dbReference type="GO" id="GO:0042157">
    <property type="term" value="P:lipoprotein metabolic process"/>
    <property type="evidence" value="ECO:0000266"/>
    <property type="project" value="RGD"/>
</dbReference>
<dbReference type="GO" id="GO:0042953">
    <property type="term" value="P:lipoprotein transport"/>
    <property type="evidence" value="ECO:0000266"/>
    <property type="project" value="RGD"/>
</dbReference>
<dbReference type="GO" id="GO:0034383">
    <property type="term" value="P:low-density lipoprotein particle clearance"/>
    <property type="evidence" value="ECO:0000266"/>
    <property type="project" value="RGD"/>
</dbReference>
<dbReference type="GO" id="GO:0034374">
    <property type="term" value="P:low-density lipoprotein particle remodeling"/>
    <property type="evidence" value="ECO:0000266"/>
    <property type="project" value="RGD"/>
</dbReference>
<dbReference type="GO" id="GO:0007399">
    <property type="term" value="P:nervous system development"/>
    <property type="evidence" value="ECO:0000266"/>
    <property type="project" value="RGD"/>
</dbReference>
<dbReference type="GO" id="GO:0010886">
    <property type="term" value="P:positive regulation of cholesterol storage"/>
    <property type="evidence" value="ECO:0000266"/>
    <property type="project" value="RGD"/>
</dbReference>
<dbReference type="GO" id="GO:0010628">
    <property type="term" value="P:positive regulation of gene expression"/>
    <property type="evidence" value="ECO:0000266"/>
    <property type="project" value="RGD"/>
</dbReference>
<dbReference type="GO" id="GO:0010884">
    <property type="term" value="P:positive regulation of lipid storage"/>
    <property type="evidence" value="ECO:0000266"/>
    <property type="project" value="RGD"/>
</dbReference>
<dbReference type="GO" id="GO:0010744">
    <property type="term" value="P:positive regulation of macrophage derived foam cell differentiation"/>
    <property type="evidence" value="ECO:0000266"/>
    <property type="project" value="RGD"/>
</dbReference>
<dbReference type="GO" id="GO:0009791">
    <property type="term" value="P:post-embryonic development"/>
    <property type="evidence" value="ECO:0000266"/>
    <property type="project" value="RGD"/>
</dbReference>
<dbReference type="GO" id="GO:0045540">
    <property type="term" value="P:regulation of cholesterol biosynthetic process"/>
    <property type="evidence" value="ECO:0000266"/>
    <property type="project" value="RGD"/>
</dbReference>
<dbReference type="GO" id="GO:0009743">
    <property type="term" value="P:response to carbohydrate"/>
    <property type="evidence" value="ECO:0000314"/>
    <property type="project" value="RGD"/>
</dbReference>
<dbReference type="GO" id="GO:0032355">
    <property type="term" value="P:response to estradiol"/>
    <property type="evidence" value="ECO:0000270"/>
    <property type="project" value="RGD"/>
</dbReference>
<dbReference type="GO" id="GO:0032496">
    <property type="term" value="P:response to lipopolysaccharide"/>
    <property type="evidence" value="ECO:0000270"/>
    <property type="project" value="RGD"/>
</dbReference>
<dbReference type="GO" id="GO:0010269">
    <property type="term" value="P:response to selenium ion"/>
    <property type="evidence" value="ECO:0000270"/>
    <property type="project" value="RGD"/>
</dbReference>
<dbReference type="GO" id="GO:0009615">
    <property type="term" value="P:response to virus"/>
    <property type="evidence" value="ECO:0000266"/>
    <property type="project" value="RGD"/>
</dbReference>
<dbReference type="GO" id="GO:0007283">
    <property type="term" value="P:spermatogenesis"/>
    <property type="evidence" value="ECO:0000266"/>
    <property type="project" value="RGD"/>
</dbReference>
<dbReference type="GO" id="GO:0019433">
    <property type="term" value="P:triglyceride catabolic process"/>
    <property type="evidence" value="ECO:0000315"/>
    <property type="project" value="RGD"/>
</dbReference>
<dbReference type="GO" id="GO:0006642">
    <property type="term" value="P:triglyceride mobilization"/>
    <property type="evidence" value="ECO:0000266"/>
    <property type="project" value="RGD"/>
</dbReference>
<dbReference type="CDD" id="cd20521">
    <property type="entry name" value="CYCLIN_CCNF_rpt1"/>
    <property type="match status" value="1"/>
</dbReference>
<dbReference type="FunFam" id="1.25.10.20:FF:000004">
    <property type="entry name" value="Apolipoprotein B"/>
    <property type="match status" value="1"/>
</dbReference>
<dbReference type="FunFam" id="2.30.230.10:FF:000003">
    <property type="entry name" value="Apolipoprotein B"/>
    <property type="match status" value="1"/>
</dbReference>
<dbReference type="FunFam" id="1.10.472.10:FF:000038">
    <property type="entry name" value="Cyclin F"/>
    <property type="match status" value="1"/>
</dbReference>
<dbReference type="Gene3D" id="1.10.472.10">
    <property type="entry name" value="Cyclin-like"/>
    <property type="match status" value="2"/>
</dbReference>
<dbReference type="Gene3D" id="2.30.230.10">
    <property type="entry name" value="Lipovitellin, beta-sheet shell regions, chain A"/>
    <property type="match status" value="1"/>
</dbReference>
<dbReference type="Gene3D" id="2.20.80.10">
    <property type="entry name" value="Lipovitellin-phosvitin complex, chain A, domain 4"/>
    <property type="match status" value="1"/>
</dbReference>
<dbReference type="Gene3D" id="1.25.10.20">
    <property type="entry name" value="Vitellinogen, superhelical"/>
    <property type="match status" value="1"/>
</dbReference>
<dbReference type="InterPro" id="IPR022176">
    <property type="entry name" value="ApoB100_C"/>
</dbReference>
<dbReference type="InterPro" id="IPR052418">
    <property type="entry name" value="Apolipoprotein_B"/>
</dbReference>
<dbReference type="InterPro" id="IPR013763">
    <property type="entry name" value="Cyclin-like_dom"/>
</dbReference>
<dbReference type="InterPro" id="IPR036915">
    <property type="entry name" value="Cyclin-like_sf"/>
</dbReference>
<dbReference type="InterPro" id="IPR006671">
    <property type="entry name" value="Cyclin_N"/>
</dbReference>
<dbReference type="InterPro" id="IPR015819">
    <property type="entry name" value="Lipid_transp_b-sht_shell"/>
</dbReference>
<dbReference type="InterPro" id="IPR009454">
    <property type="entry name" value="Lipid_transpt_open_b-sht"/>
</dbReference>
<dbReference type="InterPro" id="IPR011030">
    <property type="entry name" value="Lipovitellin_superhlx_dom"/>
</dbReference>
<dbReference type="InterPro" id="IPR015816">
    <property type="entry name" value="Vitellinogen_b-sht_N"/>
</dbReference>
<dbReference type="InterPro" id="IPR015255">
    <property type="entry name" value="Vitellinogen_open_b-sht"/>
</dbReference>
<dbReference type="InterPro" id="IPR001747">
    <property type="entry name" value="Vitellogenin_N"/>
</dbReference>
<dbReference type="PANTHER" id="PTHR13769">
    <property type="entry name" value="APOLIPOPROTEIN B"/>
    <property type="match status" value="1"/>
</dbReference>
<dbReference type="PANTHER" id="PTHR13769:SF1">
    <property type="entry name" value="APOLIPOPROTEIN B-100"/>
    <property type="match status" value="1"/>
</dbReference>
<dbReference type="Pfam" id="PF12491">
    <property type="entry name" value="ApoB100_C"/>
    <property type="match status" value="1"/>
</dbReference>
<dbReference type="Pfam" id="PF00134">
    <property type="entry name" value="Cyclin_N"/>
    <property type="match status" value="1"/>
</dbReference>
<dbReference type="Pfam" id="PF06448">
    <property type="entry name" value="DUF1081"/>
    <property type="match status" value="1"/>
</dbReference>
<dbReference type="Pfam" id="PF09172">
    <property type="entry name" value="Vit_open_b-sht"/>
    <property type="match status" value="1"/>
</dbReference>
<dbReference type="Pfam" id="PF01347">
    <property type="entry name" value="Vitellogenin_N"/>
    <property type="match status" value="1"/>
</dbReference>
<dbReference type="SMART" id="SM00385">
    <property type="entry name" value="CYCLIN"/>
    <property type="match status" value="1"/>
</dbReference>
<dbReference type="SMART" id="SM01169">
    <property type="entry name" value="DUF1943"/>
    <property type="match status" value="1"/>
</dbReference>
<dbReference type="SMART" id="SM00638">
    <property type="entry name" value="LPD_N"/>
    <property type="match status" value="1"/>
</dbReference>
<dbReference type="SUPFAM" id="SSF47954">
    <property type="entry name" value="Cyclin-like"/>
    <property type="match status" value="2"/>
</dbReference>
<dbReference type="SUPFAM" id="SSF56968">
    <property type="entry name" value="Lipovitellin-phosvitin complex, beta-sheet shell regions"/>
    <property type="match status" value="2"/>
</dbReference>
<dbReference type="SUPFAM" id="SSF48431">
    <property type="entry name" value="Lipovitellin-phosvitin complex, superhelical domain"/>
    <property type="match status" value="1"/>
</dbReference>
<dbReference type="PROSITE" id="PS51211">
    <property type="entry name" value="VITELLOGENIN"/>
    <property type="match status" value="1"/>
</dbReference>
<accession>Q7TMA5</accession>
<sequence>MGPQRPALRAPLLLLFLLLFLDTSVWAQDATRFKHLRKYVYSYEAESSSGVRGTADSRSATKINCKVELEVPQVCTLIMRTSQCTLKEVYGFNPEGKALMKKTKNSEEFASAMSRYELKLAFPEGKRVALYPDLGEPNYILNIKRGIISALLVPPETEEDKQVLFQDTVYGNCSTQVTVNSRKGTVATEMSTERNLQHCDGFQPISTSVSPLALIKGLVRPLSTLISSSQSCQYTLEPKRKHVSEAICNEQHLFLPFSYKNKYGIMTHVTQKLSLEDTPKINSRFFRGGINQVGLAFESTKSTSPPKQADAVLKTLQELKKLSISEQNAQRANLFHKLVTELRGLSGEAITSLLPQLIEVSSPITLQALIQCGQPECYTHILQWLKTEKAHPLLIDIVTYLMALIPNPSVQRLQEIFNTAKELQSRATLYALSHAVNSYYAIMDHSRSPVLEDIAGYLMKQIDNECMGDEDRTFLILRVIGNMGRTMERVMPALKSSVLNCVRSTKPSLQIQKAALQALRKMEMGDEVRTILFDTFVNDVAPVEKRLAAYLLLMRSPSSSDINKIAKLLQWEQSEQVKNFVASHIANILNSEELYVQDLKNLIKNALVNSRLPTIMDFRKFSRNYQISKSVSIPLFDPVSAKIEGNLVFDPSSYLPKESMLKTTLTVFGIASLDLFEIGLEGKGFEPTLEALFGKQGFFPDSVNKALYWVNGQVPDRVSKVLVDHFGYTKDDKHEQDMVNGIMPIVDKLIKELKSKEIPEARAYLRILGKELGFVRLQDLQVLGKLLLNGAQTFRGVPQMIVQAIREGSKDDLFLHYIFMENAFELPTGVGLQLQVSSSGVFTPGIKAGVRLELANIQAELVAKPSVSLEFVTNMGIIIPDFAKSGVQMNTNFFHESGLEARVALKAGQLKVIIPSPKRPVKLFSGSNTLHLVSTTKTEVIPPLIENRKSWSTCKPFFTGMNYCTTGAYSNASSTESASYYPLTGDTRYELELKPTGEVEQYSASATYELLKEDKSLVDTLKFLVQAEGVQQSEATAMFKYNRRSRTLSSEVLIPGFDVNFGTILRVNDESSKDKNTYKLILDIQNKKITEVSVVGHVSYDKKGDGKVKGVVSIPRLQAEARSEVHTHWSPTKLLFQMDSSATAYGSTISKRVAWRYDNEKIEFDWNTGTNVDTKKVASNFPVDLSRYPRMVHEYANGLLDHRVPQTDMTFRHMGSKLIVDHLNGLSELNLPKVGLPDFHIPDNLFLKTDGRVKYTLNKNRIEIDIPLPLGGKSSKDLKVPESVRTPALNFKSVGFHLPSQEVQIPTFTIPKTHQLQVPLLGILDLSTNVYSNLYNWSVSYTGGNTSRDHFSLQAQYRMKADSVVDLFSYSVQGSGETTYDSKSTFTLSCDGSLHHKFLDSKFKVSHVEKFGNNPVSKGLLTFETSSALGPQMSATVQLDSKKKQHLYVKDIKVDGQFRVFSLYAQGEYGLSYERDSMTGQMSGESNMKFNSTYFQGTNQIVGMYQDGMLSVTSTSDLQDGIFKNTASLKYENYELTLKSDSSGQYENFAASNKLDMTFSKQSALLRSEHQANYKSLRLVTLLSGSLTSQGVELNADILGTDKINTGAHKSTLKIAQDGVSTSATTNLKYSPLLLENELNAELGLSGASMKLSTSGRFKEHHAKFSLDGRAALTEVSLGSIYQAMILGADSKNVFNFKLSREGLKLSNDMMGSYAEMKLDHTHSLRISGLSLDFFSKMDNIYSGDKFYKQNFNLQLQPYSFGITLSNDLKYDALVLTNNGRLRLEPLKLNVGGNFKGTYQNNELKHIYTISYTDLVVASYRADTVATVQGVEFSHRLNADIEGLASSVDVTTSYSSDPLHFNNVFRFVLAPFTLGVDTHTSGDGKMSLWGEHTGQMYSKFLLKAEPLALTFSHDYKGSTSHNLLYKNSVSTALEHTLSALLTPAEQTSSWKFKTSLNDKVYSQEFEAYNTKDKIGIELSGRADLSGLYSPIKVPFFYSEPVNVLNSLEINDAFDEPREFTIDAVVKYDKNQDVHTISLPFFQSLPDYLERNRRGIISLLEAMKGELQRLSVDQFVRKYRVALSRLPQQIHDYLNASDWERQVAGAKEKLTSFMENYRITDNDVLIALDSAKINLNEKLSQLETYAIQFDQYIRDNYDAQDLKRTIAQIIDRIIEKLKMLDEQYHIRVNLAKSIHNLYLFVENVDLNQISSSGASWIQNVDTKYQIRIQIQEKLQHLRTQIHNIDIQQLAAELKQQIEALDVPMHLDQLRTAILFQRISVIIERVKYFVMNLIEDFKVTEKINTFRVIVRELIEKYEVDRQIQVLMDKSIELAHRYSLSEPLQKLSNVLQQIEIKDYYDKLVGFIDDTVEWIKAVSFKNIIEELNRLIDMSVKKLKAFDYHQFVDKTNSKIREMTQRINAEIQALELPQKTEALKLWVEDFKTTVSNSLEKLKDTKVTVVVDWLQDGLAQIKAQFQDALEDVRDRIYQMDIQGELERCLSLVSQVYSTVVTYISDWWTLTAKNITDFAEQYSTQKWAESVKALVEQGFIVPEIQTFLGTMPAFEVSLHALQEANFQTPDFIVPLTDLRIPSIWINFKMLKNVKIPLRFSTPEFTLLNTFRVRSFTIDLLEIKAKIIRTIDQMLSSELQWPLPEVYLRDLEMVNISLARLSLPDFHVPEITIPEFTIPNVNLKDLQVPDLHIPEFQLPHLSCTTEIPAFGKLHSVLKIQSPLFILDASANIQNITTSENKAEIVASVTARGESKFEALNFDFQAQAQFLELNANPLVLKESVNFSSKHVRMEHEGKILVSGKALEGKSDTVARLHTEKNTVEFNNGIVVKINNQFTLDSQTKYFHKLSVPRLDFSSKASLNNEIKTLLEAGHMAWTSSGTGSWNWACPNFSDEGIHSSKISFIVDGPIASFGLSNNINGKHLRVVQKLTSESGFLNYSRFEVESKVESQHVGSSILTAEGRALLGDAKAEMTGEHNANLNGKVIGTLKNSLFFSAQPFEITASTNNEGNLKVSFPLKLTGKIDFLNNYALFLSPHAQQASWQLSTRFNQYKYNQNFSAINNEHNMEASIVMNGDANLDFLNIPLTIPEINLPYTRFTTPLLKDFSIWEETGLKEFLKTTKQSFDLSIKAQYKKNRDKHSVVIPLKMFYEFMLNNVNSWDRKFEKVRDNALHFLTASYNETKIKFDKYKTENSLNQPSRTFQNRGHTIPVLNIEVSPFAVETLASSHVIPKAIRTPSVTIPGPNIIVPSYRLVLPSLQLPVFHIPRTLFKFSLPDFKKLSTIDNIYIPAMGNFTYDFSFKSSVITLNTNAGLYNQSDLVARFLSSSSFVTDALQYKLEGTSRLMRKKVLKLATAVSLTNKFLKGSHDSTISLTKKNMEASVKTTANLHAPIFTMNFKQELNGNTKSKPTVSSSIELNYDFNSSKLHSAAKGGVDHKFSLESLTSYLSIESFTKGNIKGSFLSQEYSGSVANEANVYLNSKGTRSSVRLQGASNFAGIWNFEVGENFAGEATLRRIYGTWEHNMINHLQVFSYFDTKGKQTCRATLELSPWTMSTLLQVHVSQPSPLFDLHHFDQEVILKASTKNQKVSWKSEVQVESQVLQHNAHFSNDQEEVRLDIAGSLEGQLWDLENFFLPAFGKSLRELLQIDGKRQYLQASTSLHYTKNPNGYLLSLPVQELTDRFIIPGLKLNDFSGIKIYKKLSTSPFALNLTMLPKVKFPGVDLLTQYSKPEGSSVPTFETTIPEIQLTVSQFTLPKSFPVGNTVFDLNKLTNLIADVDLPSITLPEQTIEIPSLEFSVPAGIFIPFFGELTAHVGMASPLYNVTWSTGWKNKADHVETFLDSTCSSTLQFLEYALKVVGTHRIENDKFIYKIKGTLQHCDFNVKYNEDGIFEGLWDLEGEAHLDITSPALTDFHLHYKEDKTSVSASAASPAIGTVSLDASTDDQSVRLNVYFRPQSPPDNKLSIFKMEWRDKESDGETYIKINWEEEAAFRLLDSLKSNVPKASEAVYDYVKKYHLGHASSELRKSLQNDAEHAIRMVDEMNVNAQRVTRDTYQSLYKKMLAQESQSIPEKLKKMVLGSLVRITQKYHMAVTWLMDSVIHFLKFNRVQFPGNAGTYTVDELYTIAMRETKKLLSQLFNGLGHLFSYVQDQVEKSRVINDITFKCPFSPTPCKLKDVLLIFREDLNILSNLGQQDINFTTILSDFQSFLERLLDIIEEKIECLKNNESTCVPDHINMFFKTHIPFAFKSLRENIYSVFSEFNDFVQSILQEGSYKLQQVHQYMKAFREEYFDPSVVGWTVKYYEIEEKMVDLIKTLLAPLRDFYSEYSVTAADFASKMSTQVEQFVSRDIREYLSMLADINGKGREKVAELSIVVKERIKSWSTAVAEITSDYLRQLHSKLQDFSDQLSGYYEKFVAESTRLIDLSIQNYHMFLRYIAELLKKLQVATANNGLLKRGDFEAAVKLGIACLYNEGLSVSDEAYAEVNGLKASRFFSMDERLNMGSDPFIWLSICPPCFRKLRDFAGKGCWEAQPALAKDCAGGSQLGLEGKAFSESVCQLFQASQAVNKQQIFSVQKGLSDTVRYILIGWLVEVAPMKDFTSLCLHLTVECVGRYLQRKLVPRYKLQLLGIACMVICTWFISKEILTIREAVRLTDNTYKYKDLVRVKREIISALEGKIRIPTVVDYKEVLLTLVPVTPRTQYLCSFLCELTLSVYTPAHLASAALLLARLMHGQTQP</sequence>
<protein>
    <recommendedName>
        <fullName>Apolipoprotein B-100</fullName>
        <shortName>Apo B-100</shortName>
    </recommendedName>
    <component>
        <recommendedName>
            <fullName>Apolipoprotein B-48</fullName>
            <shortName>Apo B-48</shortName>
        </recommendedName>
    </component>
</protein>
<feature type="signal peptide" evidence="1">
    <location>
        <begin position="1"/>
        <end position="27"/>
    </location>
</feature>
<feature type="chain" id="PRO_0000293536" description="Apolipoprotein B-100">
    <location>
        <begin position="28"/>
        <end position="4743"/>
    </location>
</feature>
<feature type="chain" id="PRO_0000293537" description="Apolipoprotein B-48">
    <location>
        <begin position="28"/>
        <end position="2146"/>
    </location>
</feature>
<feature type="domain" description="Vitellogenin" evidence="5">
    <location>
        <begin position="33"/>
        <end position="660"/>
    </location>
</feature>
<feature type="region of interest" description="Heparin-binding" evidence="1">
    <location>
        <begin position="29"/>
        <end position="113"/>
    </location>
</feature>
<feature type="region of interest" description="Heparin-binding" evidence="1">
    <location>
        <begin position="219"/>
        <end position="293"/>
    </location>
</feature>
<feature type="region of interest" description="Heparin-binding" evidence="1">
    <location>
        <begin position="890"/>
        <end position="947"/>
    </location>
</feature>
<feature type="region of interest" description="Heparin-binding" evidence="1">
    <location>
        <begin position="2010"/>
        <end position="2145"/>
    </location>
</feature>
<feature type="region of interest" description="Heparin-binding" evidence="1">
    <location>
        <begin position="3123"/>
        <end position="3198"/>
    </location>
</feature>
<feature type="region of interest" description="Basic (possible receptor binding region)" evidence="1">
    <location>
        <begin position="3136"/>
        <end position="3146"/>
    </location>
</feature>
<feature type="region of interest" description="LDL receptor binding" evidence="1">
    <location>
        <begin position="3336"/>
        <end position="3356"/>
    </location>
</feature>
<feature type="region of interest" description="Heparin-binding" evidence="1">
    <location>
        <begin position="3346"/>
        <end position="3479"/>
    </location>
</feature>
<feature type="region of interest" description="Basic (possible receptor binding region)" evidence="1">
    <location>
        <begin position="3349"/>
        <end position="3357"/>
    </location>
</feature>
<feature type="modified residue" description="N6-acetyllysine" evidence="3">
    <location>
        <position position="1973"/>
    </location>
</feature>
<feature type="modified residue" description="Phosphoserine" evidence="9">
    <location>
        <position position="2006"/>
    </location>
</feature>
<feature type="modified residue" description="Phosphoserine" evidence="3">
    <location>
        <position position="3981"/>
    </location>
</feature>
<feature type="modified residue" description="Phosphothreonine" evidence="3">
    <location>
        <position position="3985"/>
    </location>
</feature>
<feature type="glycosylation site" description="N-linked (GlcNAc...) asparagine" evidence="4">
    <location>
        <position position="172"/>
    </location>
</feature>
<feature type="glycosylation site" description="N-linked (GlcNAc...) asparagine" evidence="4">
    <location>
        <position position="971"/>
    </location>
</feature>
<feature type="glycosylation site" description="N-linked (GlcNAc...) asparagine" evidence="4">
    <location>
        <position position="1336"/>
    </location>
</feature>
<feature type="glycosylation site" description="N-linked (GlcNAc...) asparagine" evidence="4">
    <location>
        <position position="1345"/>
    </location>
</feature>
<feature type="glycosylation site" description="N-linked (GlcNAc...) asparagine" evidence="4">
    <location>
        <position position="1491"/>
    </location>
</feature>
<feature type="glycosylation site" description="N-linked (GlcNAc...) asparagine" evidence="4">
    <location>
        <position position="2094"/>
    </location>
</feature>
<feature type="glycosylation site" description="N-linked (GlcNAc...) asparagine" evidence="4">
    <location>
        <position position="2522"/>
    </location>
</feature>
<feature type="glycosylation site" description="N-linked (GlcNAc...) asparagine" evidence="4">
    <location>
        <position position="2662"/>
    </location>
</feature>
<feature type="glycosylation site" description="N-linked (GlcNAc...) asparagine" evidence="4">
    <location>
        <position position="2741"/>
    </location>
</feature>
<feature type="glycosylation site" description="N-linked (GlcNAc...) asparagine" evidence="4">
    <location>
        <position position="2791"/>
    </location>
</feature>
<feature type="glycosylation site" description="N-linked (GlcNAc...) asparagine" evidence="4">
    <location>
        <position position="2897"/>
    </location>
</feature>
<feature type="glycosylation site" description="N-linked (GlcNAc...) asparagine" evidence="4">
    <location>
        <position position="2944"/>
    </location>
</feature>
<feature type="glycosylation site" description="N-linked (GlcNAc...) asparagine" evidence="4">
    <location>
        <position position="3063"/>
    </location>
</feature>
<feature type="glycosylation site" description="N-linked (GlcNAc...) asparagine" evidence="4">
    <location>
        <position position="3186"/>
    </location>
</feature>
<feature type="glycosylation site" description="N-linked (GlcNAc...) asparagine" evidence="4">
    <location>
        <position position="3299"/>
    </location>
</feature>
<feature type="glycosylation site" description="N-linked (GlcNAc...) asparagine" evidence="4">
    <location>
        <position position="3321"/>
    </location>
</feature>
<feature type="glycosylation site" description="N-linked (GlcNAc...) asparagine" evidence="4">
    <location>
        <position position="3428"/>
    </location>
</feature>
<feature type="glycosylation site" description="N-linked (GlcNAc...) asparagine" evidence="4">
    <location>
        <position position="3715"/>
    </location>
</feature>
<feature type="glycosylation site" description="N-linked (GlcNAc...) asparagine" evidence="4">
    <location>
        <position position="3828"/>
    </location>
</feature>
<feature type="glycosylation site" description="N-linked (GlcNAc...) asparagine" evidence="4">
    <location>
        <position position="4203"/>
    </location>
</feature>
<feature type="glycosylation site" description="N-linked (GlcNAc...) asparagine" evidence="4">
    <location>
        <position position="4232"/>
    </location>
</feature>
<feature type="disulfide bond" evidence="5">
    <location>
        <begin position="65"/>
        <end position="84"/>
    </location>
</feature>
<feature type="disulfide bond" evidence="5">
    <location>
        <begin position="173"/>
        <end position="199"/>
    </location>
</feature>
<feature type="disulfide bond" evidence="5">
    <location>
        <begin position="232"/>
        <end position="248"/>
    </location>
</feature>
<feature type="disulfide bond" evidence="5">
    <location>
        <begin position="372"/>
        <end position="377"/>
    </location>
</feature>
<feature type="disulfide bond" evidence="5">
    <location>
        <begin position="466"/>
        <end position="501"/>
    </location>
</feature>
<feature type="disulfide bond" evidence="5">
    <location>
        <begin position="954"/>
        <end position="964"/>
    </location>
</feature>
<reference key="1">
    <citation type="submission" date="2003-06" db="EMBL/GenBank/DDBJ databases">
        <title>Liver regeneration after PH.</title>
        <authorList>
            <person name="Xu C.S."/>
            <person name="Li W.Q."/>
            <person name="Li Y.C."/>
            <person name="Wang G.P."/>
            <person name="Chai L.Q."/>
            <person name="Yuan J.Y."/>
            <person name="Yang K.J."/>
            <person name="Yan H.M."/>
            <person name="Chang C.F."/>
            <person name="Zhao L.F."/>
            <person name="Ma H."/>
            <person name="Wang L."/>
            <person name="Wang S.F."/>
            <person name="Han H.P."/>
            <person name="Shi J.B."/>
            <person name="Rahman S."/>
            <person name="Wang Q.N."/>
            <person name="Zhang J.B."/>
        </authorList>
    </citation>
    <scope>NUCLEOTIDE SEQUENCE [LARGE SCALE MRNA]</scope>
    <source>
        <tissue>Liver</tissue>
    </source>
</reference>
<reference key="2">
    <citation type="journal article" date="1978" name="J. Biol. Chem.">
        <title>Identification of circulating apolipoproteins synthesized by rat small intestine in vivo.</title>
        <authorList>
            <person name="Wu A.L."/>
            <person name="Windmueller H.G."/>
        </authorList>
    </citation>
    <scope>FUNCTION</scope>
    <scope>TISSUE SPECIFICITY</scope>
    <scope>SUBCELLULAR LOCATION</scope>
</reference>
<reference key="3">
    <citation type="journal article" date="1982" name="Proc. Natl. Acad. Sci. U.S.A.">
        <title>Apolipoprotein B (B-48) of rat chylomicrons is not a precursor of the apolipoprotein of low density lipoproteins.</title>
        <authorList>
            <person name="Van't Hooft F.M."/>
            <person name="Hardman D.A."/>
            <person name="Kane J.P."/>
            <person name="Havel R.J."/>
        </authorList>
    </citation>
    <scope>CHARACTERIZATION</scope>
    <scope>RNA EDITING</scope>
</reference>
<reference key="4">
    <citation type="journal article" date="1989" name="Proc. Natl. Acad. Sci. U.S.A.">
        <title>Expression of apolipoprotein B mRNAs encoding higher- and lower-molecular weight isoproteins in rat liver and intestine.</title>
        <authorList>
            <person name="Tennyson G.E."/>
            <person name="Sabatos C.A."/>
            <person name="Higuchi K."/>
            <person name="Meglin N."/>
            <person name="Brewer H.B. Jr."/>
        </authorList>
    </citation>
    <scope>RNA EDITING</scope>
</reference>
<reference key="5">
    <citation type="journal article" date="2012" name="Nat. Commun.">
        <title>Quantitative maps of protein phosphorylation sites across 14 different rat organs and tissues.</title>
        <authorList>
            <person name="Lundby A."/>
            <person name="Secher A."/>
            <person name="Lage K."/>
            <person name="Nordsborg N.B."/>
            <person name="Dmytriyev A."/>
            <person name="Lundby C."/>
            <person name="Olsen J.V."/>
        </authorList>
    </citation>
    <scope>PHOSPHORYLATION [LARGE SCALE ANALYSIS] AT SER-2006</scope>
    <scope>IDENTIFICATION BY MASS SPECTROMETRY [LARGE SCALE ANALYSIS]</scope>
</reference>
<keyword id="KW-0007">Acetylation</keyword>
<keyword id="KW-0065">Atherosclerosis</keyword>
<keyword id="KW-0153">Cholesterol metabolism</keyword>
<keyword id="KW-0162">Chylomicron</keyword>
<keyword id="KW-0963">Cytoplasm</keyword>
<keyword id="KW-1015">Disulfide bond</keyword>
<keyword id="KW-0325">Glycoprotein</keyword>
<keyword id="KW-0358">Heparin-binding</keyword>
<keyword id="KW-0427">LDL</keyword>
<keyword id="KW-0551">Lipid droplet</keyword>
<keyword id="KW-0443">Lipid metabolism</keyword>
<keyword id="KW-0445">Lipid transport</keyword>
<keyword id="KW-0449">Lipoprotein</keyword>
<keyword id="KW-0564">Palmitate</keyword>
<keyword id="KW-0597">Phosphoprotein</keyword>
<keyword id="KW-1185">Reference proteome</keyword>
<keyword id="KW-0691">RNA editing</keyword>
<keyword id="KW-0964">Secreted</keyword>
<keyword id="KW-0732">Signal</keyword>
<keyword id="KW-0753">Steroid metabolism</keyword>
<keyword id="KW-1207">Sterol metabolism</keyword>
<keyword id="KW-0813">Transport</keyword>
<keyword id="KW-0850">VLDL</keyword>
<proteinExistence type="evidence at protein level"/>
<name>APOB_RAT</name>
<organism>
    <name type="scientific">Rattus norvegicus</name>
    <name type="common">Rat</name>
    <dbReference type="NCBI Taxonomy" id="10116"/>
    <lineage>
        <taxon>Eukaryota</taxon>
        <taxon>Metazoa</taxon>
        <taxon>Chordata</taxon>
        <taxon>Craniata</taxon>
        <taxon>Vertebrata</taxon>
        <taxon>Euteleostomi</taxon>
        <taxon>Mammalia</taxon>
        <taxon>Eutheria</taxon>
        <taxon>Euarchontoglires</taxon>
        <taxon>Glires</taxon>
        <taxon>Rodentia</taxon>
        <taxon>Myomorpha</taxon>
        <taxon>Muroidea</taxon>
        <taxon>Muridae</taxon>
        <taxon>Murinae</taxon>
        <taxon>Rattus</taxon>
    </lineage>
</organism>
<evidence type="ECO:0000250" key="1"/>
<evidence type="ECO:0000250" key="2">
    <source>
        <dbReference type="UniProtKB" id="E9Q414"/>
    </source>
</evidence>
<evidence type="ECO:0000250" key="3">
    <source>
        <dbReference type="UniProtKB" id="P04114"/>
    </source>
</evidence>
<evidence type="ECO:0000255" key="4"/>
<evidence type="ECO:0000255" key="5">
    <source>
        <dbReference type="PROSITE-ProRule" id="PRU00557"/>
    </source>
</evidence>
<evidence type="ECO:0000269" key="6">
    <source>
    </source>
</evidence>
<evidence type="ECO:0000269" key="7">
    <source>
    </source>
</evidence>
<evidence type="ECO:0000269" key="8">
    <source>
    </source>
</evidence>
<evidence type="ECO:0007744" key="9">
    <source>
    </source>
</evidence>
<comment type="function">
    <text evidence="7">Apolipoprotein B is a major protein constituent of chylomicrons (apo B-48), LDL (apo B-100) and VLDL (apo B-100). Apo B-100 functions as a recognition signal for the cellular binding and internalization of LDL particles by the apoB/E receptor.</text>
</comment>
<comment type="subunit">
    <text evidence="2 3">Interacts with PCSK9. Interacts with MTTP. Interacts with AUP1 (By similarity). Interacts with CIDEB (By similarity).</text>
</comment>
<comment type="interaction">
    <interactant intactId="EBI-15185298">
        <id>Q7TMA5</id>
    </interactant>
    <interactant intactId="EBI-2925493">
        <id>P04639</id>
        <label>Apoa1</label>
    </interactant>
    <organismsDiffer>false</organismsDiffer>
    <experiments>2</experiments>
</comment>
<comment type="subcellular location">
    <subcellularLocation>
        <location evidence="3">Cytoplasm</location>
    </subcellularLocation>
    <subcellularLocation>
        <location evidence="7">Secreted</location>
    </subcellularLocation>
    <subcellularLocation>
        <location evidence="3">Lipid droplet</location>
    </subcellularLocation>
</comment>
<comment type="tissue specificity">
    <text evidence="7">Detected in intestine and liver (at protein level).</text>
</comment>
<comment type="PTM">
    <text evidence="1">Palmitoylated; structural requirement for proper assembly of the hydrophobic core of the lipoprotein particle.</text>
</comment>
<comment type="RNA editing">
    <location>
        <position position="2147" evidence="6"/>
    </location>
    <text evidence="6 8">The stop codon (UAA) at position 2147 is created by an APOBEC1-containing mRNA editing complex. Apo B-48, derived from the fully edited RNA, is produced only in the intestine and is found in chylomicrons. Apo B-48 is a shortened form of apo B-100 which lacks the LDL-receptor region. The unedited version (apo B-100) is produced by the liver and is found in the VLDL and LDL.</text>
</comment>
<gene>
    <name type="primary">Apob</name>
    <name type="ORF">Aa1064</name>
    <name type="ORF">Ac1-060</name>
</gene>